<dbReference type="EC" id="1.6.2.2" evidence="2"/>
<dbReference type="EMBL" id="DS027696">
    <property type="protein sequence ID" value="EAW18968.1"/>
    <property type="status" value="ALT_SEQ"/>
    <property type="molecule type" value="Genomic_DNA"/>
</dbReference>
<dbReference type="RefSeq" id="XP_001260865.1">
    <property type="nucleotide sequence ID" value="XM_001260864.1"/>
</dbReference>
<dbReference type="SMR" id="A1DHW1"/>
<dbReference type="STRING" id="331117.A1DHW1"/>
<dbReference type="EnsemblFungi" id="EAW18968">
    <property type="protein sequence ID" value="EAW18968"/>
    <property type="gene ID" value="NFIA_089250"/>
</dbReference>
<dbReference type="GeneID" id="4587423"/>
<dbReference type="KEGG" id="nfi:NFIA_089250"/>
<dbReference type="VEuPathDB" id="FungiDB:NFIA_089250"/>
<dbReference type="eggNOG" id="KOG0534">
    <property type="taxonomic scope" value="Eukaryota"/>
</dbReference>
<dbReference type="OrthoDB" id="432685at2759"/>
<dbReference type="UniPathway" id="UPA00559"/>
<dbReference type="Proteomes" id="UP000006702">
    <property type="component" value="Unassembled WGS sequence"/>
</dbReference>
<dbReference type="GO" id="GO:0005783">
    <property type="term" value="C:endoplasmic reticulum"/>
    <property type="evidence" value="ECO:0007669"/>
    <property type="project" value="TreeGrafter"/>
</dbReference>
<dbReference type="GO" id="GO:0005741">
    <property type="term" value="C:mitochondrial outer membrane"/>
    <property type="evidence" value="ECO:0007669"/>
    <property type="project" value="UniProtKB-SubCell"/>
</dbReference>
<dbReference type="GO" id="GO:0004128">
    <property type="term" value="F:cytochrome-b5 reductase activity, acting on NAD(P)H"/>
    <property type="evidence" value="ECO:0000250"/>
    <property type="project" value="UniProtKB"/>
</dbReference>
<dbReference type="GO" id="GO:0003954">
    <property type="term" value="F:NADH dehydrogenase activity"/>
    <property type="evidence" value="ECO:0000250"/>
    <property type="project" value="UniProtKB"/>
</dbReference>
<dbReference type="GO" id="GO:0016740">
    <property type="term" value="F:transferase activity"/>
    <property type="evidence" value="ECO:0007669"/>
    <property type="project" value="UniProtKB-KW"/>
</dbReference>
<dbReference type="GO" id="GO:0017183">
    <property type="term" value="P:protein histidyl modification to diphthamide"/>
    <property type="evidence" value="ECO:0000250"/>
    <property type="project" value="UniProtKB"/>
</dbReference>
<dbReference type="GO" id="GO:0002926">
    <property type="term" value="P:tRNA wobble base 5-methoxycarbonylmethyl-2-thiouridinylation"/>
    <property type="evidence" value="ECO:0000250"/>
    <property type="project" value="UniProtKB"/>
</dbReference>
<dbReference type="CDD" id="cd06183">
    <property type="entry name" value="cyt_b5_reduct_like"/>
    <property type="match status" value="1"/>
</dbReference>
<dbReference type="FunFam" id="2.40.30.10:FF:000032">
    <property type="entry name" value="NADH-cytochrome b5 reductase"/>
    <property type="match status" value="1"/>
</dbReference>
<dbReference type="FunFam" id="3.40.50.80:FF:000019">
    <property type="entry name" value="NADH-cytochrome b5 reductase"/>
    <property type="match status" value="1"/>
</dbReference>
<dbReference type="Gene3D" id="3.40.50.80">
    <property type="entry name" value="Nucleotide-binding domain of ferredoxin-NADP reductase (FNR) module"/>
    <property type="match status" value="1"/>
</dbReference>
<dbReference type="Gene3D" id="2.40.30.10">
    <property type="entry name" value="Translation factors"/>
    <property type="match status" value="1"/>
</dbReference>
<dbReference type="InterPro" id="IPR001834">
    <property type="entry name" value="CBR-like"/>
</dbReference>
<dbReference type="InterPro" id="IPR008333">
    <property type="entry name" value="Cbr1-like_FAD-bd_dom"/>
</dbReference>
<dbReference type="InterPro" id="IPR017927">
    <property type="entry name" value="FAD-bd_FR_type"/>
</dbReference>
<dbReference type="InterPro" id="IPR001709">
    <property type="entry name" value="Flavoprot_Pyr_Nucl_cyt_Rdtase"/>
</dbReference>
<dbReference type="InterPro" id="IPR039261">
    <property type="entry name" value="FNR_nucleotide-bd"/>
</dbReference>
<dbReference type="InterPro" id="IPR001433">
    <property type="entry name" value="OxRdtase_FAD/NAD-bd"/>
</dbReference>
<dbReference type="InterPro" id="IPR017938">
    <property type="entry name" value="Riboflavin_synthase-like_b-brl"/>
</dbReference>
<dbReference type="PANTHER" id="PTHR19370">
    <property type="entry name" value="NADH-CYTOCHROME B5 REDUCTASE"/>
    <property type="match status" value="1"/>
</dbReference>
<dbReference type="PANTHER" id="PTHR19370:SF184">
    <property type="entry name" value="NADH-CYTOCHROME B5 REDUCTASE-LIKE"/>
    <property type="match status" value="1"/>
</dbReference>
<dbReference type="Pfam" id="PF00970">
    <property type="entry name" value="FAD_binding_6"/>
    <property type="match status" value="1"/>
</dbReference>
<dbReference type="Pfam" id="PF00175">
    <property type="entry name" value="NAD_binding_1"/>
    <property type="match status" value="1"/>
</dbReference>
<dbReference type="PRINTS" id="PR00406">
    <property type="entry name" value="CYTB5RDTASE"/>
</dbReference>
<dbReference type="PRINTS" id="PR00371">
    <property type="entry name" value="FPNCR"/>
</dbReference>
<dbReference type="SUPFAM" id="SSF52343">
    <property type="entry name" value="Ferredoxin reductase-like, C-terminal NADP-linked domain"/>
    <property type="match status" value="1"/>
</dbReference>
<dbReference type="SUPFAM" id="SSF63380">
    <property type="entry name" value="Riboflavin synthase domain-like"/>
    <property type="match status" value="1"/>
</dbReference>
<dbReference type="PROSITE" id="PS51384">
    <property type="entry name" value="FAD_FR"/>
    <property type="match status" value="1"/>
</dbReference>
<evidence type="ECO:0000250" key="1"/>
<evidence type="ECO:0000250" key="2">
    <source>
        <dbReference type="UniProtKB" id="P38626"/>
    </source>
</evidence>
<evidence type="ECO:0000255" key="3"/>
<evidence type="ECO:0000255" key="4">
    <source>
        <dbReference type="PROSITE-ProRule" id="PRU00716"/>
    </source>
</evidence>
<evidence type="ECO:0000305" key="5"/>
<gene>
    <name type="primary">cbr1</name>
    <name type="ORF">NFIA_089250</name>
</gene>
<proteinExistence type="inferred from homology"/>
<sequence>MSALSSENINGVYIPSALLIFGTFIVKKEFVPYAVALTAILAGLKLFTGGSKPRKVLNPTEFQEFVLKEKTDISHNVCIYRFALPRPADILGLPIGQHISLAATIEGQPKEVVRSYTPISSDNEAGYFDLLVKAYPQGNISKYLTTLKIGDTMKVRGPKGAMVYTPNMCRHIGMIAGGTGITPMLQIIKAVIRNRPRNGGNDTTKLDLIFANVNPDDILLKEELDKLAAEDPDFNIYYVLNNPPQGWTGGVGFVTPEMIKEHLPAPASDVKILLCGPPPMISAMKKATESLGYTKARPVSKLEDQVFCF</sequence>
<name>NCB5R_NEOFI</name>
<reference key="1">
    <citation type="journal article" date="2008" name="PLoS Genet.">
        <title>Genomic islands in the pathogenic filamentous fungus Aspergillus fumigatus.</title>
        <authorList>
            <person name="Fedorova N.D."/>
            <person name="Khaldi N."/>
            <person name="Joardar V.S."/>
            <person name="Maiti R."/>
            <person name="Amedeo P."/>
            <person name="Anderson M.J."/>
            <person name="Crabtree J."/>
            <person name="Silva J.C."/>
            <person name="Badger J.H."/>
            <person name="Albarraq A."/>
            <person name="Angiuoli S."/>
            <person name="Bussey H."/>
            <person name="Bowyer P."/>
            <person name="Cotty P.J."/>
            <person name="Dyer P.S."/>
            <person name="Egan A."/>
            <person name="Galens K."/>
            <person name="Fraser-Liggett C.M."/>
            <person name="Haas B.J."/>
            <person name="Inman J.M."/>
            <person name="Kent R."/>
            <person name="Lemieux S."/>
            <person name="Malavazi I."/>
            <person name="Orvis J."/>
            <person name="Roemer T."/>
            <person name="Ronning C.M."/>
            <person name="Sundaram J.P."/>
            <person name="Sutton G."/>
            <person name="Turner G."/>
            <person name="Venter J.C."/>
            <person name="White O.R."/>
            <person name="Whitty B.R."/>
            <person name="Youngman P."/>
            <person name="Wolfe K.H."/>
            <person name="Goldman G.H."/>
            <person name="Wortman J.R."/>
            <person name="Jiang B."/>
            <person name="Denning D.W."/>
            <person name="Nierman W.C."/>
        </authorList>
    </citation>
    <scope>NUCLEOTIDE SEQUENCE [LARGE SCALE GENOMIC DNA]</scope>
    <source>
        <strain>ATCC 1020 / DSM 3700 / CBS 544.65 / FGSC A1164 / JCM 1740 / NRRL 181 / WB 181</strain>
    </source>
</reference>
<organism>
    <name type="scientific">Neosartorya fischeri (strain ATCC 1020 / DSM 3700 / CBS 544.65 / FGSC A1164 / JCM 1740 / NRRL 181 / WB 181)</name>
    <name type="common">Aspergillus fischerianus</name>
    <dbReference type="NCBI Taxonomy" id="331117"/>
    <lineage>
        <taxon>Eukaryota</taxon>
        <taxon>Fungi</taxon>
        <taxon>Dikarya</taxon>
        <taxon>Ascomycota</taxon>
        <taxon>Pezizomycotina</taxon>
        <taxon>Eurotiomycetes</taxon>
        <taxon>Eurotiomycetidae</taxon>
        <taxon>Eurotiales</taxon>
        <taxon>Aspergillaceae</taxon>
        <taxon>Aspergillus</taxon>
        <taxon>Aspergillus subgen. Fumigati</taxon>
    </lineage>
</organism>
<protein>
    <recommendedName>
        <fullName>NADH-cytochrome b5 reductase 1</fullName>
        <ecNumber evidence="2">1.6.2.2</ecNumber>
    </recommendedName>
    <alternativeName>
        <fullName>Microsomal cytochrome b reductase</fullName>
    </alternativeName>
</protein>
<feature type="chain" id="PRO_0000330159" description="NADH-cytochrome b5 reductase 1">
    <location>
        <begin position="1"/>
        <end position="309"/>
    </location>
</feature>
<feature type="transmembrane region" description="Helical" evidence="3">
    <location>
        <begin position="30"/>
        <end position="50"/>
    </location>
</feature>
<feature type="domain" description="FAD-binding FR-type" evidence="4">
    <location>
        <begin position="60"/>
        <end position="165"/>
    </location>
</feature>
<feature type="binding site" evidence="1">
    <location>
        <begin position="145"/>
        <end position="160"/>
    </location>
    <ligand>
        <name>FAD</name>
        <dbReference type="ChEBI" id="CHEBI:57692"/>
    </ligand>
</feature>
<feature type="binding site" evidence="1">
    <location>
        <begin position="171"/>
        <end position="208"/>
    </location>
    <ligand>
        <name>FAD</name>
        <dbReference type="ChEBI" id="CHEBI:57692"/>
    </ligand>
</feature>
<accession>A1DHW1</accession>
<comment type="function">
    <text evidence="2">NADH-dependent reductase for dph3 and cytochrome b5. Required for the first step of diphthamide biosynthesis, a post-translational modification of histidine which occurs in elongation factor 2. Dph1 and dph2 transfer a 3-amino-3-carboxypropyl (ACP) group from S-adenosyl-L-methionine (SAM) to a histidine residue, the reaction is assisted by a reduction system comprising dph3 and a NADH-dependent reductase, predominantly cbr1. By reducing dph3, also involved in the formation of the tRNA wobble base modification mcm5s 2U (5-methoxycarbonylmethyl-2-thiouridine), mediated by the elongator complex. The cytochrome b5/NADH cytochrome b5 reductase electron transfer system supports the catalytic activity of several sterol biosynthetic enzymes.</text>
</comment>
<comment type="catalytic activity">
    <reaction evidence="2">
        <text>2 Fe(III)-[cytochrome b5] + NADH = 2 Fe(II)-[cytochrome b5] + NAD(+) + H(+)</text>
        <dbReference type="Rhea" id="RHEA:46680"/>
        <dbReference type="Rhea" id="RHEA-COMP:10438"/>
        <dbReference type="Rhea" id="RHEA-COMP:10439"/>
        <dbReference type="ChEBI" id="CHEBI:15378"/>
        <dbReference type="ChEBI" id="CHEBI:29033"/>
        <dbReference type="ChEBI" id="CHEBI:29034"/>
        <dbReference type="ChEBI" id="CHEBI:57540"/>
        <dbReference type="ChEBI" id="CHEBI:57945"/>
        <dbReference type="EC" id="1.6.2.2"/>
    </reaction>
</comment>
<comment type="catalytic activity">
    <reaction evidence="2">
        <text>2 Fe(3+)-[Dph3] + NADH = 2 Fe(2+)-[Dph3] + NAD(+) + H(+)</text>
        <dbReference type="Rhea" id="RHEA:71231"/>
        <dbReference type="Rhea" id="RHEA-COMP:18002"/>
        <dbReference type="Rhea" id="RHEA-COMP:18003"/>
        <dbReference type="ChEBI" id="CHEBI:15378"/>
        <dbReference type="ChEBI" id="CHEBI:29033"/>
        <dbReference type="ChEBI" id="CHEBI:29034"/>
        <dbReference type="ChEBI" id="CHEBI:57540"/>
        <dbReference type="ChEBI" id="CHEBI:57945"/>
        <dbReference type="ChEBI" id="CHEBI:83228"/>
    </reaction>
    <physiologicalReaction direction="left-to-right" evidence="2">
        <dbReference type="Rhea" id="RHEA:71232"/>
    </physiologicalReaction>
</comment>
<comment type="cofactor">
    <cofactor evidence="3">
        <name>FAD</name>
        <dbReference type="ChEBI" id="CHEBI:57692"/>
    </cofactor>
</comment>
<comment type="pathway">
    <text evidence="2">Protein modification; peptidyl-diphthamide biosynthesis.</text>
</comment>
<comment type="subunit">
    <text evidence="2">Monomer. Component of the 2-(3-amino-3-carboxypropyl)histidine synthase complex composed of dph1, dph2, dph3 and a NADH-dependent reductase, predominantly cbr1.</text>
</comment>
<comment type="subcellular location">
    <subcellularLocation>
        <location evidence="2">Mitochondrion outer membrane</location>
        <topology evidence="3">Single-pass membrane protein</topology>
    </subcellularLocation>
</comment>
<comment type="similarity">
    <text evidence="5">Belongs to the flavoprotein pyridine nucleotide cytochrome reductase family.</text>
</comment>
<comment type="sequence caution" evidence="5">
    <conflict type="erroneous gene model prediction">
        <sequence resource="EMBL-CDS" id="EAW18968"/>
    </conflict>
</comment>
<keyword id="KW-0274">FAD</keyword>
<keyword id="KW-0285">Flavoprotein</keyword>
<keyword id="KW-0472">Membrane</keyword>
<keyword id="KW-0496">Mitochondrion</keyword>
<keyword id="KW-1000">Mitochondrion outer membrane</keyword>
<keyword id="KW-0520">NAD</keyword>
<keyword id="KW-0560">Oxidoreductase</keyword>
<keyword id="KW-1185">Reference proteome</keyword>
<keyword id="KW-0808">Transferase</keyword>
<keyword id="KW-0812">Transmembrane</keyword>
<keyword id="KW-1133">Transmembrane helix</keyword>